<evidence type="ECO:0000250" key="1"/>
<evidence type="ECO:0000250" key="2">
    <source>
        <dbReference type="UniProtKB" id="P0A1E3"/>
    </source>
</evidence>
<evidence type="ECO:0000305" key="3"/>
<protein>
    <recommendedName>
        <fullName>Cysteine synthase A</fullName>
        <shortName>CSase A</shortName>
        <ecNumber>2.5.1.47</ecNumber>
    </recommendedName>
    <alternativeName>
        <fullName>O-acetylserine (thiol)-lyase A</fullName>
        <shortName>OAS-TL A</shortName>
    </alternativeName>
    <alternativeName>
        <fullName>O-acetylserine sulfhydrylase A</fullName>
    </alternativeName>
</protein>
<name>CYSK_SALTI</name>
<reference key="1">
    <citation type="journal article" date="2001" name="Nature">
        <title>Complete genome sequence of a multiple drug resistant Salmonella enterica serovar Typhi CT18.</title>
        <authorList>
            <person name="Parkhill J."/>
            <person name="Dougan G."/>
            <person name="James K.D."/>
            <person name="Thomson N.R."/>
            <person name="Pickard D."/>
            <person name="Wain J."/>
            <person name="Churcher C.M."/>
            <person name="Mungall K.L."/>
            <person name="Bentley S.D."/>
            <person name="Holden M.T.G."/>
            <person name="Sebaihia M."/>
            <person name="Baker S."/>
            <person name="Basham D."/>
            <person name="Brooks K."/>
            <person name="Chillingworth T."/>
            <person name="Connerton P."/>
            <person name="Cronin A."/>
            <person name="Davis P."/>
            <person name="Davies R.M."/>
            <person name="Dowd L."/>
            <person name="White N."/>
            <person name="Farrar J."/>
            <person name="Feltwell T."/>
            <person name="Hamlin N."/>
            <person name="Haque A."/>
            <person name="Hien T.T."/>
            <person name="Holroyd S."/>
            <person name="Jagels K."/>
            <person name="Krogh A."/>
            <person name="Larsen T.S."/>
            <person name="Leather S."/>
            <person name="Moule S."/>
            <person name="O'Gaora P."/>
            <person name="Parry C."/>
            <person name="Quail M.A."/>
            <person name="Rutherford K.M."/>
            <person name="Simmonds M."/>
            <person name="Skelton J."/>
            <person name="Stevens K."/>
            <person name="Whitehead S."/>
            <person name="Barrell B.G."/>
        </authorList>
    </citation>
    <scope>NUCLEOTIDE SEQUENCE [LARGE SCALE GENOMIC DNA]</scope>
    <source>
        <strain>CT18</strain>
    </source>
</reference>
<reference key="2">
    <citation type="journal article" date="2003" name="J. Bacteriol.">
        <title>Comparative genomics of Salmonella enterica serovar Typhi strains Ty2 and CT18.</title>
        <authorList>
            <person name="Deng W."/>
            <person name="Liou S.-R."/>
            <person name="Plunkett G. III"/>
            <person name="Mayhew G.F."/>
            <person name="Rose D.J."/>
            <person name="Burland V."/>
            <person name="Kodoyianni V."/>
            <person name="Schwartz D.C."/>
            <person name="Blattner F.R."/>
        </authorList>
    </citation>
    <scope>NUCLEOTIDE SEQUENCE [LARGE SCALE GENOMIC DNA]</scope>
    <source>
        <strain>ATCC 700931 / Ty2</strain>
    </source>
</reference>
<dbReference type="EC" id="2.5.1.47"/>
<dbReference type="EMBL" id="AL513382">
    <property type="protein sequence ID" value="CAD07662.1"/>
    <property type="molecule type" value="Genomic_DNA"/>
</dbReference>
<dbReference type="EMBL" id="AE014613">
    <property type="protein sequence ID" value="AAO68145.1"/>
    <property type="molecule type" value="Genomic_DNA"/>
</dbReference>
<dbReference type="RefSeq" id="NP_456967.1">
    <property type="nucleotide sequence ID" value="NC_003198.1"/>
</dbReference>
<dbReference type="RefSeq" id="WP_000036904.1">
    <property type="nucleotide sequence ID" value="NZ_WSUR01000025.1"/>
</dbReference>
<dbReference type="SMR" id="P0A1E4"/>
<dbReference type="STRING" id="220341.gene:17586566"/>
<dbReference type="KEGG" id="stt:t0427"/>
<dbReference type="KEGG" id="sty:STY2666"/>
<dbReference type="PATRIC" id="fig|220341.7.peg.2702"/>
<dbReference type="eggNOG" id="COG0031">
    <property type="taxonomic scope" value="Bacteria"/>
</dbReference>
<dbReference type="HOGENOM" id="CLU_021018_1_2_6"/>
<dbReference type="OMA" id="VVTVFWD"/>
<dbReference type="OrthoDB" id="9805733at2"/>
<dbReference type="UniPathway" id="UPA00136">
    <property type="reaction ID" value="UER00200"/>
</dbReference>
<dbReference type="Proteomes" id="UP000000541">
    <property type="component" value="Chromosome"/>
</dbReference>
<dbReference type="Proteomes" id="UP000002670">
    <property type="component" value="Chromosome"/>
</dbReference>
<dbReference type="GO" id="GO:0004124">
    <property type="term" value="F:cysteine synthase activity"/>
    <property type="evidence" value="ECO:0007669"/>
    <property type="project" value="UniProtKB-EC"/>
</dbReference>
<dbReference type="GO" id="GO:0006535">
    <property type="term" value="P:cysteine biosynthetic process from serine"/>
    <property type="evidence" value="ECO:0007669"/>
    <property type="project" value="InterPro"/>
</dbReference>
<dbReference type="CDD" id="cd01561">
    <property type="entry name" value="CBS_like"/>
    <property type="match status" value="1"/>
</dbReference>
<dbReference type="FunFam" id="3.40.50.1100:FF:000009">
    <property type="entry name" value="Cysteine synthase"/>
    <property type="match status" value="1"/>
</dbReference>
<dbReference type="Gene3D" id="3.40.50.1100">
    <property type="match status" value="2"/>
</dbReference>
<dbReference type="InterPro" id="IPR005856">
    <property type="entry name" value="Cys_synth"/>
</dbReference>
<dbReference type="InterPro" id="IPR050214">
    <property type="entry name" value="Cys_Synth/Cystath_Beta-Synth"/>
</dbReference>
<dbReference type="InterPro" id="IPR005859">
    <property type="entry name" value="CysK"/>
</dbReference>
<dbReference type="InterPro" id="IPR001216">
    <property type="entry name" value="P-phosphate_BS"/>
</dbReference>
<dbReference type="InterPro" id="IPR001926">
    <property type="entry name" value="TrpB-like_PALP"/>
</dbReference>
<dbReference type="InterPro" id="IPR036052">
    <property type="entry name" value="TrpB-like_PALP_sf"/>
</dbReference>
<dbReference type="NCBIfam" id="TIGR01139">
    <property type="entry name" value="cysK"/>
    <property type="match status" value="1"/>
</dbReference>
<dbReference type="NCBIfam" id="TIGR01136">
    <property type="entry name" value="cysKM"/>
    <property type="match status" value="1"/>
</dbReference>
<dbReference type="NCBIfam" id="NF007989">
    <property type="entry name" value="PRK10717.1"/>
    <property type="match status" value="1"/>
</dbReference>
<dbReference type="PANTHER" id="PTHR10314">
    <property type="entry name" value="CYSTATHIONINE BETA-SYNTHASE"/>
    <property type="match status" value="1"/>
</dbReference>
<dbReference type="Pfam" id="PF00291">
    <property type="entry name" value="PALP"/>
    <property type="match status" value="1"/>
</dbReference>
<dbReference type="SUPFAM" id="SSF53686">
    <property type="entry name" value="Tryptophan synthase beta subunit-like PLP-dependent enzymes"/>
    <property type="match status" value="1"/>
</dbReference>
<dbReference type="PROSITE" id="PS00901">
    <property type="entry name" value="CYS_SYNTHASE"/>
    <property type="match status" value="1"/>
</dbReference>
<feature type="initiator methionine" description="Removed" evidence="1">
    <location>
        <position position="1"/>
    </location>
</feature>
<feature type="chain" id="PRO_0000167088" description="Cysteine synthase A">
    <location>
        <begin position="2"/>
        <end position="323"/>
    </location>
</feature>
<feature type="binding site" evidence="2">
    <location>
        <position position="8"/>
    </location>
    <ligand>
        <name>hydrogen sulfide</name>
        <dbReference type="ChEBI" id="CHEBI:29919"/>
        <note>allosteric inhibitor; ligand shared between dimeric partners</note>
    </ligand>
</feature>
<feature type="binding site" description="in other chain" evidence="2">
    <location>
        <position position="35"/>
    </location>
    <ligand>
        <name>hydrogen sulfide</name>
        <dbReference type="ChEBI" id="CHEBI:29919"/>
        <note>allosteric inhibitor; ligand shared between dimeric partners</note>
    </ligand>
</feature>
<feature type="binding site" evidence="1">
    <location>
        <position position="72"/>
    </location>
    <ligand>
        <name>pyridoxal 5'-phosphate</name>
        <dbReference type="ChEBI" id="CHEBI:597326"/>
    </ligand>
</feature>
<feature type="binding site" evidence="1">
    <location>
        <begin position="177"/>
        <end position="181"/>
    </location>
    <ligand>
        <name>pyridoxal 5'-phosphate</name>
        <dbReference type="ChEBI" id="CHEBI:597326"/>
    </ligand>
</feature>
<feature type="binding site" description="in other chain" evidence="2">
    <location>
        <position position="269"/>
    </location>
    <ligand>
        <name>hydrogen sulfide</name>
        <dbReference type="ChEBI" id="CHEBI:29919"/>
        <note>allosteric inhibitor; ligand shared between dimeric partners</note>
    </ligand>
</feature>
<feature type="binding site" evidence="1">
    <location>
        <position position="273"/>
    </location>
    <ligand>
        <name>pyridoxal 5'-phosphate</name>
        <dbReference type="ChEBI" id="CHEBI:597326"/>
    </ligand>
</feature>
<feature type="modified residue" description="N6-(pyridoxal phosphate)lysine" evidence="1">
    <location>
        <position position="42"/>
    </location>
</feature>
<organism>
    <name type="scientific">Salmonella typhi</name>
    <dbReference type="NCBI Taxonomy" id="90370"/>
    <lineage>
        <taxon>Bacteria</taxon>
        <taxon>Pseudomonadati</taxon>
        <taxon>Pseudomonadota</taxon>
        <taxon>Gammaproteobacteria</taxon>
        <taxon>Enterobacterales</taxon>
        <taxon>Enterobacteriaceae</taxon>
        <taxon>Salmonella</taxon>
    </lineage>
</organism>
<proteinExistence type="inferred from homology"/>
<gene>
    <name type="primary">cysK</name>
    <name type="ordered locus">STY2666</name>
    <name type="ordered locus">t0427</name>
</gene>
<comment type="function">
    <text evidence="1">Two cysteine synthase enzymes are found. Both catalyze the same reaction. Cysteine synthase B can also use thiosulfate in place of sulfide to give cysteine thiosulfonate as a product (By similarity).</text>
</comment>
<comment type="catalytic activity">
    <reaction>
        <text>O-acetyl-L-serine + hydrogen sulfide = L-cysteine + acetate</text>
        <dbReference type="Rhea" id="RHEA:14829"/>
        <dbReference type="ChEBI" id="CHEBI:29919"/>
        <dbReference type="ChEBI" id="CHEBI:30089"/>
        <dbReference type="ChEBI" id="CHEBI:35235"/>
        <dbReference type="ChEBI" id="CHEBI:58340"/>
        <dbReference type="EC" id="2.5.1.47"/>
    </reaction>
</comment>
<comment type="cofactor">
    <cofactor evidence="1">
        <name>pyridoxal 5'-phosphate</name>
        <dbReference type="ChEBI" id="CHEBI:597326"/>
    </cofactor>
</comment>
<comment type="pathway">
    <text>Amino-acid biosynthesis; L-cysteine biosynthesis; L-cysteine from L-serine: step 2/2.</text>
</comment>
<comment type="subunit">
    <text evidence="1">Homodimer.</text>
</comment>
<comment type="similarity">
    <text evidence="3">Belongs to the cysteine synthase/cystathionine beta-synthase family.</text>
</comment>
<keyword id="KW-0021">Allosteric enzyme</keyword>
<keyword id="KW-0028">Amino-acid biosynthesis</keyword>
<keyword id="KW-0198">Cysteine biosynthesis</keyword>
<keyword id="KW-0663">Pyridoxal phosphate</keyword>
<keyword id="KW-0808">Transferase</keyword>
<sequence length="323" mass="34536">MSKIYEDNSLTIGHTPLVRLNRIGNGRILAKVESRNPSFSVKCRIGANMIWDAEKRGVLKPGVELVEPTSGNTGIALAYVAAARGYKLTLTMPETMSIERRKLLKALGANLVLTEGAKGMKGAIQKAEEIVASDPQKYLLLQQFSNPANPEIHEKTTGPEIWEDTDGQVDVFISGVGTGGTLTGVTRYIKGTKGKTDLITVAVEPTDSPVIAQALAGEEIKPGPHKIQGIGAGFIPGNLDLKLIDKVVGITNEEAISTARRLMEEEGILAGISSGAAVAAALKLQEDESFTNKNIVVILPSSGERYLSTALFADLFTEKELQQ</sequence>
<accession>P0A1E4</accession>
<accession>P12674</accession>